<proteinExistence type="inferred from homology"/>
<evidence type="ECO:0000255" key="1">
    <source>
        <dbReference type="HAMAP-Rule" id="MF_00238"/>
    </source>
</evidence>
<reference key="1">
    <citation type="journal article" date="2009" name="PLoS ONE">
        <title>Genome sequence of the endosymbiont Rickettsia peacockii and comparison with virulent Rickettsia rickettsii: identification of virulence factors.</title>
        <authorList>
            <person name="Felsheim R.F."/>
            <person name="Kurtti T.J."/>
            <person name="Munderloh U.G."/>
        </authorList>
    </citation>
    <scope>NUCLEOTIDE SEQUENCE [LARGE SCALE GENOMIC DNA]</scope>
    <source>
        <strain>Rustic</strain>
    </source>
</reference>
<name>KCY_RICPU</name>
<sequence length="219" mass="24502">MVDLKTKAFDISQNFTISLDGPAASGKGTIGLILAKKFSLKYFQSSIVYRQLAFDCISQKIDVTDIDAVIALSKELKLDNNFDLENENIGNIASQIAVISEIRNNLNKYLINLVKTTPRMIMEGRDIGTVVAPDADLKIFITANPQIRAERRYKQLQAKGKTCILDEILRQIILRDKRDKERKAAPLLPASDALIIDTSKLSAMEVVEEVTNYIKNKIT</sequence>
<protein>
    <recommendedName>
        <fullName evidence="1">Cytidylate kinase</fullName>
        <shortName evidence="1">CK</shortName>
        <ecNumber evidence="1">2.7.4.25</ecNumber>
    </recommendedName>
    <alternativeName>
        <fullName evidence="1">Cytidine monophosphate kinase</fullName>
        <shortName evidence="1">CMP kinase</shortName>
    </alternativeName>
</protein>
<accession>C4K1D2</accession>
<dbReference type="EC" id="2.7.4.25" evidence="1"/>
<dbReference type="EMBL" id="CP001227">
    <property type="protein sequence ID" value="ACR47383.1"/>
    <property type="molecule type" value="Genomic_DNA"/>
</dbReference>
<dbReference type="RefSeq" id="WP_012719757.1">
    <property type="nucleotide sequence ID" value="NC_012730.1"/>
</dbReference>
<dbReference type="SMR" id="C4K1D2"/>
<dbReference type="KEGG" id="rpk:RPR_02930"/>
<dbReference type="HOGENOM" id="CLU_079959_0_2_5"/>
<dbReference type="Proteomes" id="UP000005015">
    <property type="component" value="Chromosome"/>
</dbReference>
<dbReference type="GO" id="GO:0005737">
    <property type="term" value="C:cytoplasm"/>
    <property type="evidence" value="ECO:0007669"/>
    <property type="project" value="UniProtKB-SubCell"/>
</dbReference>
<dbReference type="GO" id="GO:0005524">
    <property type="term" value="F:ATP binding"/>
    <property type="evidence" value="ECO:0007669"/>
    <property type="project" value="UniProtKB-UniRule"/>
</dbReference>
<dbReference type="GO" id="GO:0036430">
    <property type="term" value="F:CMP kinase activity"/>
    <property type="evidence" value="ECO:0007669"/>
    <property type="project" value="RHEA"/>
</dbReference>
<dbReference type="GO" id="GO:0036431">
    <property type="term" value="F:dCMP kinase activity"/>
    <property type="evidence" value="ECO:0007669"/>
    <property type="project" value="RHEA"/>
</dbReference>
<dbReference type="GO" id="GO:0006220">
    <property type="term" value="P:pyrimidine nucleotide metabolic process"/>
    <property type="evidence" value="ECO:0007669"/>
    <property type="project" value="UniProtKB-UniRule"/>
</dbReference>
<dbReference type="CDD" id="cd02020">
    <property type="entry name" value="CMPK"/>
    <property type="match status" value="1"/>
</dbReference>
<dbReference type="Gene3D" id="3.40.50.300">
    <property type="entry name" value="P-loop containing nucleotide triphosphate hydrolases"/>
    <property type="match status" value="1"/>
</dbReference>
<dbReference type="HAMAP" id="MF_00238">
    <property type="entry name" value="Cytidyl_kinase_type1"/>
    <property type="match status" value="1"/>
</dbReference>
<dbReference type="InterPro" id="IPR003136">
    <property type="entry name" value="Cytidylate_kin"/>
</dbReference>
<dbReference type="InterPro" id="IPR011994">
    <property type="entry name" value="Cytidylate_kinase_dom"/>
</dbReference>
<dbReference type="InterPro" id="IPR027417">
    <property type="entry name" value="P-loop_NTPase"/>
</dbReference>
<dbReference type="NCBIfam" id="TIGR00017">
    <property type="entry name" value="cmk"/>
    <property type="match status" value="1"/>
</dbReference>
<dbReference type="Pfam" id="PF02224">
    <property type="entry name" value="Cytidylate_kin"/>
    <property type="match status" value="1"/>
</dbReference>
<dbReference type="SUPFAM" id="SSF52540">
    <property type="entry name" value="P-loop containing nucleoside triphosphate hydrolases"/>
    <property type="match status" value="1"/>
</dbReference>
<feature type="chain" id="PRO_1000204458" description="Cytidylate kinase">
    <location>
        <begin position="1"/>
        <end position="219"/>
    </location>
</feature>
<feature type="binding site" evidence="1">
    <location>
        <begin position="21"/>
        <end position="29"/>
    </location>
    <ligand>
        <name>ATP</name>
        <dbReference type="ChEBI" id="CHEBI:30616"/>
    </ligand>
</feature>
<keyword id="KW-0067">ATP-binding</keyword>
<keyword id="KW-0963">Cytoplasm</keyword>
<keyword id="KW-0418">Kinase</keyword>
<keyword id="KW-0547">Nucleotide-binding</keyword>
<keyword id="KW-0808">Transferase</keyword>
<comment type="catalytic activity">
    <reaction evidence="1">
        <text>CMP + ATP = CDP + ADP</text>
        <dbReference type="Rhea" id="RHEA:11600"/>
        <dbReference type="ChEBI" id="CHEBI:30616"/>
        <dbReference type="ChEBI" id="CHEBI:58069"/>
        <dbReference type="ChEBI" id="CHEBI:60377"/>
        <dbReference type="ChEBI" id="CHEBI:456216"/>
        <dbReference type="EC" id="2.7.4.25"/>
    </reaction>
</comment>
<comment type="catalytic activity">
    <reaction evidence="1">
        <text>dCMP + ATP = dCDP + ADP</text>
        <dbReference type="Rhea" id="RHEA:25094"/>
        <dbReference type="ChEBI" id="CHEBI:30616"/>
        <dbReference type="ChEBI" id="CHEBI:57566"/>
        <dbReference type="ChEBI" id="CHEBI:58593"/>
        <dbReference type="ChEBI" id="CHEBI:456216"/>
        <dbReference type="EC" id="2.7.4.25"/>
    </reaction>
</comment>
<comment type="subcellular location">
    <subcellularLocation>
        <location evidence="1">Cytoplasm</location>
    </subcellularLocation>
</comment>
<comment type="similarity">
    <text evidence="1">Belongs to the cytidylate kinase family. Type 1 subfamily.</text>
</comment>
<gene>
    <name evidence="1" type="primary">cmk</name>
    <name type="ordered locus">RPR_02930</name>
</gene>
<organism>
    <name type="scientific">Rickettsia peacockii (strain Rustic)</name>
    <dbReference type="NCBI Taxonomy" id="562019"/>
    <lineage>
        <taxon>Bacteria</taxon>
        <taxon>Pseudomonadati</taxon>
        <taxon>Pseudomonadota</taxon>
        <taxon>Alphaproteobacteria</taxon>
        <taxon>Rickettsiales</taxon>
        <taxon>Rickettsiaceae</taxon>
        <taxon>Rickettsieae</taxon>
        <taxon>Rickettsia</taxon>
        <taxon>spotted fever group</taxon>
    </lineage>
</organism>